<name>RS12_CLOB1</name>
<comment type="function">
    <text evidence="2">With S4 and S5 plays an important role in translational accuracy.</text>
</comment>
<comment type="function">
    <text evidence="2">Interacts with and stabilizes bases of the 16S rRNA that are involved in tRNA selection in the A site and with the mRNA backbone. Located at the interface of the 30S and 50S subunits, it traverses the body of the 30S subunit contacting proteins on the other side and probably holding the rRNA structure together. The combined cluster of proteins S8, S12 and S17 appears to hold together the shoulder and platform of the 30S subunit.</text>
</comment>
<comment type="subunit">
    <text evidence="2">Part of the 30S ribosomal subunit. Contacts proteins S8 and S17. May interact with IF1 in the 30S initiation complex.</text>
</comment>
<comment type="similarity">
    <text evidence="2">Belongs to the universal ribosomal protein uS12 family.</text>
</comment>
<feature type="chain" id="PRO_1000049781" description="Small ribosomal subunit protein uS12">
    <location>
        <begin position="1"/>
        <end position="125"/>
    </location>
</feature>
<feature type="modified residue" description="3-methylthioaspartic acid" evidence="1">
    <location>
        <position position="89"/>
    </location>
</feature>
<proteinExistence type="inferred from homology"/>
<organism>
    <name type="scientific">Clostridium botulinum (strain ATCC 19397 / Type A)</name>
    <dbReference type="NCBI Taxonomy" id="441770"/>
    <lineage>
        <taxon>Bacteria</taxon>
        <taxon>Bacillati</taxon>
        <taxon>Bacillota</taxon>
        <taxon>Clostridia</taxon>
        <taxon>Eubacteriales</taxon>
        <taxon>Clostridiaceae</taxon>
        <taxon>Clostridium</taxon>
    </lineage>
</organism>
<protein>
    <recommendedName>
        <fullName evidence="2">Small ribosomal subunit protein uS12</fullName>
    </recommendedName>
    <alternativeName>
        <fullName evidence="3">30S ribosomal protein S12</fullName>
    </alternativeName>
</protein>
<reference key="1">
    <citation type="journal article" date="2007" name="PLoS ONE">
        <title>Analysis of the neurotoxin complex genes in Clostridium botulinum A1-A4 and B1 strains: BoNT/A3, /Ba4 and /B1 clusters are located within plasmids.</title>
        <authorList>
            <person name="Smith T.J."/>
            <person name="Hill K.K."/>
            <person name="Foley B.T."/>
            <person name="Detter J.C."/>
            <person name="Munk A.C."/>
            <person name="Bruce D.C."/>
            <person name="Doggett N.A."/>
            <person name="Smith L.A."/>
            <person name="Marks J.D."/>
            <person name="Xie G."/>
            <person name="Brettin T.S."/>
        </authorList>
    </citation>
    <scope>NUCLEOTIDE SEQUENCE [LARGE SCALE GENOMIC DNA]</scope>
    <source>
        <strain>ATCC 19397 / Type A</strain>
    </source>
</reference>
<accession>A7FZ74</accession>
<dbReference type="EMBL" id="CP000726">
    <property type="protein sequence ID" value="ABS33845.1"/>
    <property type="molecule type" value="Genomic_DNA"/>
</dbReference>
<dbReference type="RefSeq" id="WP_003357676.1">
    <property type="nucleotide sequence ID" value="NC_009697.1"/>
</dbReference>
<dbReference type="SMR" id="A7FZ74"/>
<dbReference type="GeneID" id="92940255"/>
<dbReference type="KEGG" id="cba:CLB_3542"/>
<dbReference type="HOGENOM" id="CLU_104295_1_2_9"/>
<dbReference type="GO" id="GO:0015935">
    <property type="term" value="C:small ribosomal subunit"/>
    <property type="evidence" value="ECO:0007669"/>
    <property type="project" value="InterPro"/>
</dbReference>
<dbReference type="GO" id="GO:0019843">
    <property type="term" value="F:rRNA binding"/>
    <property type="evidence" value="ECO:0007669"/>
    <property type="project" value="UniProtKB-UniRule"/>
</dbReference>
<dbReference type="GO" id="GO:0003735">
    <property type="term" value="F:structural constituent of ribosome"/>
    <property type="evidence" value="ECO:0007669"/>
    <property type="project" value="InterPro"/>
</dbReference>
<dbReference type="GO" id="GO:0000049">
    <property type="term" value="F:tRNA binding"/>
    <property type="evidence" value="ECO:0007669"/>
    <property type="project" value="UniProtKB-UniRule"/>
</dbReference>
<dbReference type="GO" id="GO:0006412">
    <property type="term" value="P:translation"/>
    <property type="evidence" value="ECO:0007669"/>
    <property type="project" value="UniProtKB-UniRule"/>
</dbReference>
<dbReference type="CDD" id="cd03368">
    <property type="entry name" value="Ribosomal_S12"/>
    <property type="match status" value="1"/>
</dbReference>
<dbReference type="FunFam" id="2.40.50.140:FF:000001">
    <property type="entry name" value="30S ribosomal protein S12"/>
    <property type="match status" value="1"/>
</dbReference>
<dbReference type="Gene3D" id="2.40.50.140">
    <property type="entry name" value="Nucleic acid-binding proteins"/>
    <property type="match status" value="1"/>
</dbReference>
<dbReference type="HAMAP" id="MF_00403_B">
    <property type="entry name" value="Ribosomal_uS12_B"/>
    <property type="match status" value="1"/>
</dbReference>
<dbReference type="InterPro" id="IPR012340">
    <property type="entry name" value="NA-bd_OB-fold"/>
</dbReference>
<dbReference type="InterPro" id="IPR006032">
    <property type="entry name" value="Ribosomal_uS12"/>
</dbReference>
<dbReference type="InterPro" id="IPR005679">
    <property type="entry name" value="Ribosomal_uS12_bac"/>
</dbReference>
<dbReference type="NCBIfam" id="TIGR00981">
    <property type="entry name" value="rpsL_bact"/>
    <property type="match status" value="1"/>
</dbReference>
<dbReference type="PANTHER" id="PTHR11652">
    <property type="entry name" value="30S RIBOSOMAL PROTEIN S12 FAMILY MEMBER"/>
    <property type="match status" value="1"/>
</dbReference>
<dbReference type="Pfam" id="PF00164">
    <property type="entry name" value="Ribosom_S12_S23"/>
    <property type="match status" value="1"/>
</dbReference>
<dbReference type="PIRSF" id="PIRSF002133">
    <property type="entry name" value="Ribosomal_S12/S23"/>
    <property type="match status" value="1"/>
</dbReference>
<dbReference type="PRINTS" id="PR01034">
    <property type="entry name" value="RIBOSOMALS12"/>
</dbReference>
<dbReference type="SUPFAM" id="SSF50249">
    <property type="entry name" value="Nucleic acid-binding proteins"/>
    <property type="match status" value="1"/>
</dbReference>
<dbReference type="PROSITE" id="PS00055">
    <property type="entry name" value="RIBOSOMAL_S12"/>
    <property type="match status" value="1"/>
</dbReference>
<evidence type="ECO:0000250" key="1"/>
<evidence type="ECO:0000255" key="2">
    <source>
        <dbReference type="HAMAP-Rule" id="MF_00403"/>
    </source>
</evidence>
<evidence type="ECO:0000305" key="3"/>
<sequence length="125" mass="13614">MPTISQLVRKGRKTIASASDSPALKECPQKRGVCTVVKTTTPKKPNSALRKVARIRLTNGYEVTAYIPGVGHNLQEHSVVLIRGGRVKDLPGVRYHIVRGALDAAGVANRMQSRSKYGAKKPKQK</sequence>
<gene>
    <name evidence="2" type="primary">rpsL</name>
    <name type="ordered locus">CLB_3542</name>
</gene>
<keyword id="KW-0488">Methylation</keyword>
<keyword id="KW-0687">Ribonucleoprotein</keyword>
<keyword id="KW-0689">Ribosomal protein</keyword>
<keyword id="KW-0694">RNA-binding</keyword>
<keyword id="KW-0699">rRNA-binding</keyword>
<keyword id="KW-0820">tRNA-binding</keyword>